<dbReference type="EC" id="5.4.99.12" evidence="1"/>
<dbReference type="EMBL" id="CP000046">
    <property type="protein sequence ID" value="AAW37083.1"/>
    <property type="molecule type" value="Genomic_DNA"/>
</dbReference>
<dbReference type="RefSeq" id="WP_001221860.1">
    <property type="nucleotide sequence ID" value="NZ_JBGOFO010000004.1"/>
</dbReference>
<dbReference type="SMR" id="Q5HDY9"/>
<dbReference type="KEGG" id="sac:SACOL2208"/>
<dbReference type="HOGENOM" id="CLU_014673_0_1_9"/>
<dbReference type="Proteomes" id="UP000000530">
    <property type="component" value="Chromosome"/>
</dbReference>
<dbReference type="GO" id="GO:0003723">
    <property type="term" value="F:RNA binding"/>
    <property type="evidence" value="ECO:0007669"/>
    <property type="project" value="InterPro"/>
</dbReference>
<dbReference type="GO" id="GO:0160147">
    <property type="term" value="F:tRNA pseudouridine(38-40) synthase activity"/>
    <property type="evidence" value="ECO:0007669"/>
    <property type="project" value="UniProtKB-EC"/>
</dbReference>
<dbReference type="GO" id="GO:0031119">
    <property type="term" value="P:tRNA pseudouridine synthesis"/>
    <property type="evidence" value="ECO:0007669"/>
    <property type="project" value="UniProtKB-UniRule"/>
</dbReference>
<dbReference type="CDD" id="cd02570">
    <property type="entry name" value="PseudoU_synth_EcTruA"/>
    <property type="match status" value="1"/>
</dbReference>
<dbReference type="FunFam" id="3.30.70.580:FF:000001">
    <property type="entry name" value="tRNA pseudouridine synthase A"/>
    <property type="match status" value="1"/>
</dbReference>
<dbReference type="Gene3D" id="3.30.70.660">
    <property type="entry name" value="Pseudouridine synthase I, catalytic domain, C-terminal subdomain"/>
    <property type="match status" value="1"/>
</dbReference>
<dbReference type="Gene3D" id="3.30.70.580">
    <property type="entry name" value="Pseudouridine synthase I, catalytic domain, N-terminal subdomain"/>
    <property type="match status" value="1"/>
</dbReference>
<dbReference type="HAMAP" id="MF_00171">
    <property type="entry name" value="TruA"/>
    <property type="match status" value="1"/>
</dbReference>
<dbReference type="InterPro" id="IPR020103">
    <property type="entry name" value="PsdUridine_synth_cat_dom_sf"/>
</dbReference>
<dbReference type="InterPro" id="IPR001406">
    <property type="entry name" value="PsdUridine_synth_TruA"/>
</dbReference>
<dbReference type="InterPro" id="IPR020097">
    <property type="entry name" value="PsdUridine_synth_TruA_a/b_dom"/>
</dbReference>
<dbReference type="InterPro" id="IPR020095">
    <property type="entry name" value="PsdUridine_synth_TruA_C"/>
</dbReference>
<dbReference type="InterPro" id="IPR020094">
    <property type="entry name" value="TruA/RsuA/RluB/E/F_N"/>
</dbReference>
<dbReference type="NCBIfam" id="TIGR00071">
    <property type="entry name" value="hisT_truA"/>
    <property type="match status" value="1"/>
</dbReference>
<dbReference type="PANTHER" id="PTHR11142">
    <property type="entry name" value="PSEUDOURIDYLATE SYNTHASE"/>
    <property type="match status" value="1"/>
</dbReference>
<dbReference type="PANTHER" id="PTHR11142:SF0">
    <property type="entry name" value="TRNA PSEUDOURIDINE SYNTHASE-LIKE 1"/>
    <property type="match status" value="1"/>
</dbReference>
<dbReference type="Pfam" id="PF01416">
    <property type="entry name" value="PseudoU_synth_1"/>
    <property type="match status" value="2"/>
</dbReference>
<dbReference type="PIRSF" id="PIRSF001430">
    <property type="entry name" value="tRNA_psdUrid_synth"/>
    <property type="match status" value="1"/>
</dbReference>
<dbReference type="SUPFAM" id="SSF55120">
    <property type="entry name" value="Pseudouridine synthase"/>
    <property type="match status" value="1"/>
</dbReference>
<organism>
    <name type="scientific">Staphylococcus aureus (strain COL)</name>
    <dbReference type="NCBI Taxonomy" id="93062"/>
    <lineage>
        <taxon>Bacteria</taxon>
        <taxon>Bacillati</taxon>
        <taxon>Bacillota</taxon>
        <taxon>Bacilli</taxon>
        <taxon>Bacillales</taxon>
        <taxon>Staphylococcaceae</taxon>
        <taxon>Staphylococcus</taxon>
    </lineage>
</organism>
<proteinExistence type="inferred from homology"/>
<sequence length="267" mass="31280">MRILVEIAYQGNNFLGFQIQQNGRTVQQQFEKLLQRMHKRHVRIHPSSRTDRGVHAIQQYFHFDTELNIPMSQWQYAMNRTLPDDIYVNNVVTVDDDFHCRYDCVGKRYRYKVYQAQHRDPFQSGLKTFIPETLDLGKMNRAAQQFIGTHDFTGFCSQKTEVESKVRTLYQSEIVKTDDGFDYIVTGSGFLYNMVRVLVAFLIEVGKGRHEVSDVPKLLESKNRKNVPFTAPAEGLYLEKIYLDENELLKDFGNDIKIHRKKSLQND</sequence>
<feature type="chain" id="PRO_0000057449" description="tRNA pseudouridine synthase A">
    <location>
        <begin position="1"/>
        <end position="267"/>
    </location>
</feature>
<feature type="active site" description="Nucleophile" evidence="1">
    <location>
        <position position="51"/>
    </location>
</feature>
<feature type="binding site" evidence="1">
    <location>
        <position position="109"/>
    </location>
    <ligand>
        <name>substrate</name>
    </ligand>
</feature>
<reference key="1">
    <citation type="journal article" date="2005" name="J. Bacteriol.">
        <title>Insights on evolution of virulence and resistance from the complete genome analysis of an early methicillin-resistant Staphylococcus aureus strain and a biofilm-producing methicillin-resistant Staphylococcus epidermidis strain.</title>
        <authorList>
            <person name="Gill S.R."/>
            <person name="Fouts D.E."/>
            <person name="Archer G.L."/>
            <person name="Mongodin E.F."/>
            <person name="DeBoy R.T."/>
            <person name="Ravel J."/>
            <person name="Paulsen I.T."/>
            <person name="Kolonay J.F."/>
            <person name="Brinkac L.M."/>
            <person name="Beanan M.J."/>
            <person name="Dodson R.J."/>
            <person name="Daugherty S.C."/>
            <person name="Madupu R."/>
            <person name="Angiuoli S.V."/>
            <person name="Durkin A.S."/>
            <person name="Haft D.H."/>
            <person name="Vamathevan J.J."/>
            <person name="Khouri H."/>
            <person name="Utterback T.R."/>
            <person name="Lee C."/>
            <person name="Dimitrov G."/>
            <person name="Jiang L."/>
            <person name="Qin H."/>
            <person name="Weidman J."/>
            <person name="Tran K."/>
            <person name="Kang K.H."/>
            <person name="Hance I.R."/>
            <person name="Nelson K.E."/>
            <person name="Fraser C.M."/>
        </authorList>
    </citation>
    <scope>NUCLEOTIDE SEQUENCE [LARGE SCALE GENOMIC DNA]</scope>
    <source>
        <strain>COL</strain>
    </source>
</reference>
<name>TRUA_STAAC</name>
<accession>Q5HDY9</accession>
<protein>
    <recommendedName>
        <fullName evidence="1">tRNA pseudouridine synthase A</fullName>
        <ecNumber evidence="1">5.4.99.12</ecNumber>
    </recommendedName>
    <alternativeName>
        <fullName evidence="1">tRNA pseudouridine(38-40) synthase</fullName>
    </alternativeName>
    <alternativeName>
        <fullName evidence="1">tRNA pseudouridylate synthase I</fullName>
    </alternativeName>
    <alternativeName>
        <fullName evidence="1">tRNA-uridine isomerase I</fullName>
    </alternativeName>
</protein>
<evidence type="ECO:0000255" key="1">
    <source>
        <dbReference type="HAMAP-Rule" id="MF_00171"/>
    </source>
</evidence>
<gene>
    <name evidence="1" type="primary">truA</name>
    <name type="ordered locus">SACOL2208</name>
</gene>
<comment type="function">
    <text evidence="1">Formation of pseudouridine at positions 38, 39 and 40 in the anticodon stem and loop of transfer RNAs.</text>
</comment>
<comment type="catalytic activity">
    <reaction evidence="1">
        <text>uridine(38/39/40) in tRNA = pseudouridine(38/39/40) in tRNA</text>
        <dbReference type="Rhea" id="RHEA:22376"/>
        <dbReference type="Rhea" id="RHEA-COMP:10085"/>
        <dbReference type="Rhea" id="RHEA-COMP:10087"/>
        <dbReference type="ChEBI" id="CHEBI:65314"/>
        <dbReference type="ChEBI" id="CHEBI:65315"/>
        <dbReference type="EC" id="5.4.99.12"/>
    </reaction>
</comment>
<comment type="subunit">
    <text evidence="1">Homodimer.</text>
</comment>
<comment type="similarity">
    <text evidence="1">Belongs to the tRNA pseudouridine synthase TruA family.</text>
</comment>
<keyword id="KW-0413">Isomerase</keyword>
<keyword id="KW-0819">tRNA processing</keyword>